<accession>P62053</accession>
<evidence type="ECO:0000255" key="1">
    <source>
        <dbReference type="HAMAP-Rule" id="MF_00488"/>
    </source>
</evidence>
<name>LDH2_LACJO</name>
<dbReference type="EC" id="1.1.1.27" evidence="1"/>
<dbReference type="EMBL" id="AE017198">
    <property type="protein sequence ID" value="AAS09169.1"/>
    <property type="molecule type" value="Genomic_DNA"/>
</dbReference>
<dbReference type="RefSeq" id="WP_011162161.1">
    <property type="nucleotide sequence ID" value="NC_005362.1"/>
</dbReference>
<dbReference type="SMR" id="P62053"/>
<dbReference type="KEGG" id="ljo:LJ_1403"/>
<dbReference type="PATRIC" id="fig|257314.6.peg.1217"/>
<dbReference type="eggNOG" id="COG0039">
    <property type="taxonomic scope" value="Bacteria"/>
</dbReference>
<dbReference type="HOGENOM" id="CLU_045401_1_2_9"/>
<dbReference type="UniPathway" id="UPA00554">
    <property type="reaction ID" value="UER00611"/>
</dbReference>
<dbReference type="Proteomes" id="UP000000581">
    <property type="component" value="Chromosome"/>
</dbReference>
<dbReference type="GO" id="GO:0005737">
    <property type="term" value="C:cytoplasm"/>
    <property type="evidence" value="ECO:0007669"/>
    <property type="project" value="UniProtKB-SubCell"/>
</dbReference>
<dbReference type="GO" id="GO:0004459">
    <property type="term" value="F:L-lactate dehydrogenase activity"/>
    <property type="evidence" value="ECO:0007669"/>
    <property type="project" value="UniProtKB-UniRule"/>
</dbReference>
<dbReference type="GO" id="GO:0006096">
    <property type="term" value="P:glycolytic process"/>
    <property type="evidence" value="ECO:0007669"/>
    <property type="project" value="UniProtKB-UniRule"/>
</dbReference>
<dbReference type="GO" id="GO:0006089">
    <property type="term" value="P:lactate metabolic process"/>
    <property type="evidence" value="ECO:0007669"/>
    <property type="project" value="TreeGrafter"/>
</dbReference>
<dbReference type="CDD" id="cd05291">
    <property type="entry name" value="HicDH_like"/>
    <property type="match status" value="1"/>
</dbReference>
<dbReference type="FunFam" id="3.40.50.720:FF:000018">
    <property type="entry name" value="Malate dehydrogenase"/>
    <property type="match status" value="1"/>
</dbReference>
<dbReference type="Gene3D" id="3.90.110.10">
    <property type="entry name" value="Lactate dehydrogenase/glycoside hydrolase, family 4, C-terminal"/>
    <property type="match status" value="1"/>
</dbReference>
<dbReference type="Gene3D" id="3.40.50.720">
    <property type="entry name" value="NAD(P)-binding Rossmann-like Domain"/>
    <property type="match status" value="1"/>
</dbReference>
<dbReference type="HAMAP" id="MF_00488">
    <property type="entry name" value="Lactate_dehydrog"/>
    <property type="match status" value="1"/>
</dbReference>
<dbReference type="InterPro" id="IPR001557">
    <property type="entry name" value="L-lactate/malate_DH"/>
</dbReference>
<dbReference type="InterPro" id="IPR011304">
    <property type="entry name" value="L-lactate_DH"/>
</dbReference>
<dbReference type="InterPro" id="IPR018177">
    <property type="entry name" value="L-lactate_DH_AS"/>
</dbReference>
<dbReference type="InterPro" id="IPR022383">
    <property type="entry name" value="Lactate/malate_DH_C"/>
</dbReference>
<dbReference type="InterPro" id="IPR001236">
    <property type="entry name" value="Lactate/malate_DH_N"/>
</dbReference>
<dbReference type="InterPro" id="IPR015955">
    <property type="entry name" value="Lactate_DH/Glyco_Ohase_4_C"/>
</dbReference>
<dbReference type="InterPro" id="IPR036291">
    <property type="entry name" value="NAD(P)-bd_dom_sf"/>
</dbReference>
<dbReference type="NCBIfam" id="TIGR01771">
    <property type="entry name" value="L-LDH-NAD"/>
    <property type="match status" value="1"/>
</dbReference>
<dbReference type="NCBIfam" id="NF000824">
    <property type="entry name" value="PRK00066.1"/>
    <property type="match status" value="1"/>
</dbReference>
<dbReference type="PANTHER" id="PTHR43128">
    <property type="entry name" value="L-2-HYDROXYCARBOXYLATE DEHYDROGENASE (NAD(P)(+))"/>
    <property type="match status" value="1"/>
</dbReference>
<dbReference type="PANTHER" id="PTHR43128:SF16">
    <property type="entry name" value="L-LACTATE DEHYDROGENASE"/>
    <property type="match status" value="1"/>
</dbReference>
<dbReference type="Pfam" id="PF02866">
    <property type="entry name" value="Ldh_1_C"/>
    <property type="match status" value="1"/>
</dbReference>
<dbReference type="Pfam" id="PF00056">
    <property type="entry name" value="Ldh_1_N"/>
    <property type="match status" value="1"/>
</dbReference>
<dbReference type="PIRSF" id="PIRSF000102">
    <property type="entry name" value="Lac_mal_DH"/>
    <property type="match status" value="1"/>
</dbReference>
<dbReference type="PRINTS" id="PR00086">
    <property type="entry name" value="LLDHDRGNASE"/>
</dbReference>
<dbReference type="SUPFAM" id="SSF56327">
    <property type="entry name" value="LDH C-terminal domain-like"/>
    <property type="match status" value="1"/>
</dbReference>
<dbReference type="SUPFAM" id="SSF51735">
    <property type="entry name" value="NAD(P)-binding Rossmann-fold domains"/>
    <property type="match status" value="1"/>
</dbReference>
<dbReference type="PROSITE" id="PS00064">
    <property type="entry name" value="L_LDH"/>
    <property type="match status" value="1"/>
</dbReference>
<keyword id="KW-0963">Cytoplasm</keyword>
<keyword id="KW-0520">NAD</keyword>
<keyword id="KW-0560">Oxidoreductase</keyword>
<sequence length="308" mass="33283">MSRRKVFLVGDGRVGSTFANDLLQNVRIDELVICDVVKKITEGDALDLEDLAPFVGQCTVKSGDYSDAKDADIAVITAGAARKPGMTRLDLVKTNVKILESIIKPIVESGFNGIFVVSANPVDILTTLTQKLSGFPKNKVIGTGTSLDTARLRVALSHKTGVNVDHIDAYVLGEHGDTSFENFDEAIIDHKPLRSYKELDEETLVELETDVRKKGGKIIANKGATFYGVAMCLTQICKAILENKALVMPLSAPMTGEYGIHDLYIGSPAVVTANGISDVIELHLSEDENKKMAYSAAKMKEVVDGIDL</sequence>
<proteinExistence type="inferred from homology"/>
<protein>
    <recommendedName>
        <fullName evidence="1">L-lactate dehydrogenase 2</fullName>
        <shortName evidence="1">L-LDH 2</shortName>
        <ecNumber evidence="1">1.1.1.27</ecNumber>
    </recommendedName>
</protein>
<feature type="chain" id="PRO_0000168350" description="L-lactate dehydrogenase 2">
    <location>
        <begin position="1"/>
        <end position="308"/>
    </location>
</feature>
<feature type="active site" description="Proton acceptor" evidence="1">
    <location>
        <position position="175"/>
    </location>
</feature>
<feature type="binding site" evidence="1">
    <location>
        <position position="14"/>
    </location>
    <ligand>
        <name>NAD(+)</name>
        <dbReference type="ChEBI" id="CHEBI:57540"/>
    </ligand>
</feature>
<feature type="binding site" evidence="1">
    <location>
        <position position="35"/>
    </location>
    <ligand>
        <name>NAD(+)</name>
        <dbReference type="ChEBI" id="CHEBI:57540"/>
    </ligand>
</feature>
<feature type="binding site" evidence="1">
    <location>
        <position position="65"/>
    </location>
    <ligand>
        <name>NAD(+)</name>
        <dbReference type="ChEBI" id="CHEBI:57540"/>
    </ligand>
</feature>
<feature type="binding site" evidence="1">
    <location>
        <begin position="79"/>
        <end position="80"/>
    </location>
    <ligand>
        <name>NAD(+)</name>
        <dbReference type="ChEBI" id="CHEBI:57540"/>
    </ligand>
</feature>
<feature type="binding site" evidence="1">
    <location>
        <position position="88"/>
    </location>
    <ligand>
        <name>substrate</name>
    </ligand>
</feature>
<feature type="binding site" evidence="1">
    <location>
        <position position="101"/>
    </location>
    <ligand>
        <name>NAD(+)</name>
        <dbReference type="ChEBI" id="CHEBI:57540"/>
    </ligand>
</feature>
<feature type="binding site" evidence="1">
    <location>
        <begin position="120"/>
        <end position="123"/>
    </location>
    <ligand>
        <name>substrate</name>
    </ligand>
</feature>
<feature type="binding site" evidence="1">
    <location>
        <position position="143"/>
    </location>
    <ligand>
        <name>NAD(+)</name>
        <dbReference type="ChEBI" id="CHEBI:57540"/>
    </ligand>
</feature>
<feature type="binding site" evidence="1">
    <location>
        <begin position="148"/>
        <end position="151"/>
    </location>
    <ligand>
        <name>substrate</name>
    </ligand>
</feature>
<feature type="binding site" evidence="1">
    <location>
        <position position="225"/>
    </location>
    <ligand>
        <name>substrate</name>
    </ligand>
</feature>
<comment type="function">
    <text evidence="1">Catalyzes the conversion of lactate to pyruvate.</text>
</comment>
<comment type="catalytic activity">
    <reaction evidence="1">
        <text>(S)-lactate + NAD(+) = pyruvate + NADH + H(+)</text>
        <dbReference type="Rhea" id="RHEA:23444"/>
        <dbReference type="ChEBI" id="CHEBI:15361"/>
        <dbReference type="ChEBI" id="CHEBI:15378"/>
        <dbReference type="ChEBI" id="CHEBI:16651"/>
        <dbReference type="ChEBI" id="CHEBI:57540"/>
        <dbReference type="ChEBI" id="CHEBI:57945"/>
        <dbReference type="EC" id="1.1.1.27"/>
    </reaction>
</comment>
<comment type="pathway">
    <text evidence="1">Fermentation; pyruvate fermentation to lactate; (S)-lactate from pyruvate: step 1/1.</text>
</comment>
<comment type="subunit">
    <text evidence="1">Homotetramer.</text>
</comment>
<comment type="subcellular location">
    <subcellularLocation>
        <location evidence="1">Cytoplasm</location>
    </subcellularLocation>
</comment>
<comment type="similarity">
    <text evidence="1">Belongs to the LDH/MDH superfamily. LDH family.</text>
</comment>
<gene>
    <name evidence="1" type="primary">ldh2</name>
    <name type="ordered locus">LJ_1403</name>
</gene>
<reference key="1">
    <citation type="journal article" date="2004" name="Proc. Natl. Acad. Sci. U.S.A.">
        <title>The genome sequence of the probiotic intestinal bacterium Lactobacillus johnsonii NCC 533.</title>
        <authorList>
            <person name="Pridmore R.D."/>
            <person name="Berger B."/>
            <person name="Desiere F."/>
            <person name="Vilanova D."/>
            <person name="Barretto C."/>
            <person name="Pittet A.-C."/>
            <person name="Zwahlen M.-C."/>
            <person name="Rouvet M."/>
            <person name="Altermann E."/>
            <person name="Barrangou R."/>
            <person name="Mollet B."/>
            <person name="Mercenier A."/>
            <person name="Klaenhammer T."/>
            <person name="Arigoni F."/>
            <person name="Schell M.A."/>
        </authorList>
    </citation>
    <scope>NUCLEOTIDE SEQUENCE [LARGE SCALE GENOMIC DNA]</scope>
    <source>
        <strain>CNCM I-1225 / La1 / NCC 533</strain>
    </source>
</reference>
<organism>
    <name type="scientific">Lactobacillus johnsonii (strain CNCM I-12250 / La1 / NCC 533)</name>
    <dbReference type="NCBI Taxonomy" id="257314"/>
    <lineage>
        <taxon>Bacteria</taxon>
        <taxon>Bacillati</taxon>
        <taxon>Bacillota</taxon>
        <taxon>Bacilli</taxon>
        <taxon>Lactobacillales</taxon>
        <taxon>Lactobacillaceae</taxon>
        <taxon>Lactobacillus</taxon>
    </lineage>
</organism>